<dbReference type="EC" id="5.3.1.9" evidence="1"/>
<dbReference type="EMBL" id="CP000671">
    <property type="protein sequence ID" value="ABQ98467.1"/>
    <property type="molecule type" value="Genomic_DNA"/>
</dbReference>
<dbReference type="SMR" id="A5UCG6"/>
<dbReference type="KEGG" id="hip:CGSHiEE_05470"/>
<dbReference type="HOGENOM" id="CLU_017947_3_1_6"/>
<dbReference type="UniPathway" id="UPA00109">
    <property type="reaction ID" value="UER00181"/>
</dbReference>
<dbReference type="UniPathway" id="UPA00138"/>
<dbReference type="GO" id="GO:0005829">
    <property type="term" value="C:cytosol"/>
    <property type="evidence" value="ECO:0007669"/>
    <property type="project" value="TreeGrafter"/>
</dbReference>
<dbReference type="GO" id="GO:0097367">
    <property type="term" value="F:carbohydrate derivative binding"/>
    <property type="evidence" value="ECO:0007669"/>
    <property type="project" value="InterPro"/>
</dbReference>
<dbReference type="GO" id="GO:0004347">
    <property type="term" value="F:glucose-6-phosphate isomerase activity"/>
    <property type="evidence" value="ECO:0007669"/>
    <property type="project" value="UniProtKB-UniRule"/>
</dbReference>
<dbReference type="GO" id="GO:0048029">
    <property type="term" value="F:monosaccharide binding"/>
    <property type="evidence" value="ECO:0007669"/>
    <property type="project" value="TreeGrafter"/>
</dbReference>
<dbReference type="GO" id="GO:0006094">
    <property type="term" value="P:gluconeogenesis"/>
    <property type="evidence" value="ECO:0007669"/>
    <property type="project" value="UniProtKB-UniRule"/>
</dbReference>
<dbReference type="GO" id="GO:0051156">
    <property type="term" value="P:glucose 6-phosphate metabolic process"/>
    <property type="evidence" value="ECO:0007669"/>
    <property type="project" value="TreeGrafter"/>
</dbReference>
<dbReference type="GO" id="GO:0006096">
    <property type="term" value="P:glycolytic process"/>
    <property type="evidence" value="ECO:0007669"/>
    <property type="project" value="UniProtKB-UniRule"/>
</dbReference>
<dbReference type="CDD" id="cd05015">
    <property type="entry name" value="SIS_PGI_1"/>
    <property type="match status" value="1"/>
</dbReference>
<dbReference type="CDD" id="cd05016">
    <property type="entry name" value="SIS_PGI_2"/>
    <property type="match status" value="1"/>
</dbReference>
<dbReference type="FunFam" id="1.10.1390.10:FF:000001">
    <property type="entry name" value="Glucose-6-phosphate isomerase"/>
    <property type="match status" value="1"/>
</dbReference>
<dbReference type="FunFam" id="3.40.50.10490:FF:000004">
    <property type="entry name" value="Glucose-6-phosphate isomerase"/>
    <property type="match status" value="1"/>
</dbReference>
<dbReference type="Gene3D" id="1.10.1390.10">
    <property type="match status" value="1"/>
</dbReference>
<dbReference type="Gene3D" id="3.40.50.10490">
    <property type="entry name" value="Glucose-6-phosphate isomerase like protein, domain 1"/>
    <property type="match status" value="2"/>
</dbReference>
<dbReference type="HAMAP" id="MF_00473">
    <property type="entry name" value="G6P_isomerase"/>
    <property type="match status" value="1"/>
</dbReference>
<dbReference type="InterPro" id="IPR001672">
    <property type="entry name" value="G6P_Isomerase"/>
</dbReference>
<dbReference type="InterPro" id="IPR023096">
    <property type="entry name" value="G6P_Isomerase_C"/>
</dbReference>
<dbReference type="InterPro" id="IPR018189">
    <property type="entry name" value="Phosphoglucose_isomerase_CS"/>
</dbReference>
<dbReference type="InterPro" id="IPR046348">
    <property type="entry name" value="SIS_dom_sf"/>
</dbReference>
<dbReference type="InterPro" id="IPR035476">
    <property type="entry name" value="SIS_PGI_1"/>
</dbReference>
<dbReference type="InterPro" id="IPR035482">
    <property type="entry name" value="SIS_PGI_2"/>
</dbReference>
<dbReference type="NCBIfam" id="NF001211">
    <property type="entry name" value="PRK00179.1"/>
    <property type="match status" value="1"/>
</dbReference>
<dbReference type="PANTHER" id="PTHR11469">
    <property type="entry name" value="GLUCOSE-6-PHOSPHATE ISOMERASE"/>
    <property type="match status" value="1"/>
</dbReference>
<dbReference type="PANTHER" id="PTHR11469:SF1">
    <property type="entry name" value="GLUCOSE-6-PHOSPHATE ISOMERASE"/>
    <property type="match status" value="1"/>
</dbReference>
<dbReference type="Pfam" id="PF00342">
    <property type="entry name" value="PGI"/>
    <property type="match status" value="1"/>
</dbReference>
<dbReference type="PRINTS" id="PR00662">
    <property type="entry name" value="G6PISOMERASE"/>
</dbReference>
<dbReference type="SUPFAM" id="SSF53697">
    <property type="entry name" value="SIS domain"/>
    <property type="match status" value="1"/>
</dbReference>
<dbReference type="PROSITE" id="PS00765">
    <property type="entry name" value="P_GLUCOSE_ISOMERASE_1"/>
    <property type="match status" value="1"/>
</dbReference>
<dbReference type="PROSITE" id="PS00174">
    <property type="entry name" value="P_GLUCOSE_ISOMERASE_2"/>
    <property type="match status" value="1"/>
</dbReference>
<dbReference type="PROSITE" id="PS51463">
    <property type="entry name" value="P_GLUCOSE_ISOMERASE_3"/>
    <property type="match status" value="1"/>
</dbReference>
<feature type="chain" id="PRO_1000013972" description="Glucose-6-phosphate isomerase">
    <location>
        <begin position="1"/>
        <end position="549"/>
    </location>
</feature>
<feature type="active site" description="Proton donor" evidence="1">
    <location>
        <position position="355"/>
    </location>
</feature>
<feature type="active site" evidence="1">
    <location>
        <position position="387"/>
    </location>
</feature>
<feature type="active site" evidence="1">
    <location>
        <position position="515"/>
    </location>
</feature>
<gene>
    <name evidence="1" type="primary">pgi</name>
    <name type="ordered locus">CGSHiEE_05470</name>
</gene>
<evidence type="ECO:0000255" key="1">
    <source>
        <dbReference type="HAMAP-Rule" id="MF_00473"/>
    </source>
</evidence>
<protein>
    <recommendedName>
        <fullName evidence="1">Glucose-6-phosphate isomerase</fullName>
        <shortName evidence="1">GPI</shortName>
        <ecNumber evidence="1">5.3.1.9</ecNumber>
    </recommendedName>
    <alternativeName>
        <fullName evidence="1">Phosphoglucose isomerase</fullName>
        <shortName evidence="1">PGI</shortName>
    </alternativeName>
    <alternativeName>
        <fullName evidence="1">Phosphohexose isomerase</fullName>
        <shortName evidence="1">PHI</shortName>
    </alternativeName>
</protein>
<accession>A5UCG6</accession>
<proteinExistence type="inferred from homology"/>
<name>G6PI_HAEIE</name>
<organism>
    <name type="scientific">Haemophilus influenzae (strain PittEE)</name>
    <dbReference type="NCBI Taxonomy" id="374930"/>
    <lineage>
        <taxon>Bacteria</taxon>
        <taxon>Pseudomonadati</taxon>
        <taxon>Pseudomonadota</taxon>
        <taxon>Gammaproteobacteria</taxon>
        <taxon>Pasteurellales</taxon>
        <taxon>Pasteurellaceae</taxon>
        <taxon>Haemophilus</taxon>
    </lineage>
</organism>
<keyword id="KW-0963">Cytoplasm</keyword>
<keyword id="KW-0312">Gluconeogenesis</keyword>
<keyword id="KW-0324">Glycolysis</keyword>
<keyword id="KW-0413">Isomerase</keyword>
<sequence length="549" mass="61545">MKNINPTHTQAWKSLEAHKAELSNTTIQDLFKQEKNRFDDYSLTFNNQILVDFSKNNINQTTLSHLRQLAQECALDSAKEAMFTGEKINRTENRAVLHTALRNRTNTPVLVDGKDVMPEVNAVLAKMKDFCQRIISGEWKGYTGKAITDVVNIGIGGSDLGPYMVTEALRPYKNHLNMHFVSNVDGTHIAETLKKVNPETTLFLVASKTFTTQETMTNAQSARDWLLKAAKDESAVAKHFAALSTNAKDVEKFGIDTNNMFEFWDWVGGRYSLWSAIGLSIALSIGFENFEALLNGAHEMDKHFRSAPIEQNIPTTLALVGLWNTNFLGAQTEAILPYDQYLHRFAAYFQQGNMESNGKYVDRDGNVINNYQTGPIIWGEPGTNGQHAFYQLIHQGTTLIPCDFIAPAQTHNPLADHHNKLLSNFFAQTEALAFGKTKEEVEAEFIKAGKSLDDVKNIVPFKVFTGNKPTNSILVQKITPFTLGALIAMYEHKIFVQGVIFNIFSFDQWGVELGKQLANRILPELTDSEKVASHDSSTNGLINQFKAWR</sequence>
<reference key="1">
    <citation type="journal article" date="2007" name="Genome Biol.">
        <title>Characterization and modeling of the Haemophilus influenzae core and supragenomes based on the complete genomic sequences of Rd and 12 clinical nontypeable strains.</title>
        <authorList>
            <person name="Hogg J.S."/>
            <person name="Hu F.Z."/>
            <person name="Janto B."/>
            <person name="Boissy R."/>
            <person name="Hayes J."/>
            <person name="Keefe R."/>
            <person name="Post J.C."/>
            <person name="Ehrlich G.D."/>
        </authorList>
    </citation>
    <scope>NUCLEOTIDE SEQUENCE [LARGE SCALE GENOMIC DNA]</scope>
    <source>
        <strain>PittEE</strain>
    </source>
</reference>
<comment type="function">
    <text evidence="1">Catalyzes the reversible isomerization of glucose-6-phosphate to fructose-6-phosphate.</text>
</comment>
<comment type="catalytic activity">
    <reaction evidence="1">
        <text>alpha-D-glucose 6-phosphate = beta-D-fructose 6-phosphate</text>
        <dbReference type="Rhea" id="RHEA:11816"/>
        <dbReference type="ChEBI" id="CHEBI:57634"/>
        <dbReference type="ChEBI" id="CHEBI:58225"/>
        <dbReference type="EC" id="5.3.1.9"/>
    </reaction>
</comment>
<comment type="pathway">
    <text evidence="1">Carbohydrate biosynthesis; gluconeogenesis.</text>
</comment>
<comment type="pathway">
    <text evidence="1">Carbohydrate degradation; glycolysis; D-glyceraldehyde 3-phosphate and glycerone phosphate from D-glucose: step 2/4.</text>
</comment>
<comment type="subcellular location">
    <subcellularLocation>
        <location evidence="1">Cytoplasm</location>
    </subcellularLocation>
</comment>
<comment type="similarity">
    <text evidence="1">Belongs to the GPI family.</text>
</comment>